<reference key="1">
    <citation type="journal article" date="1994" name="Proc. Natl. Acad. Sci. U.S.A.">
        <title>rbcL gene sequences provide evidence for the evolutionary lineages of leptosporangiate ferns.</title>
        <authorList>
            <person name="Hasebe M."/>
            <person name="Omori T."/>
            <person name="Nakazawa M."/>
            <person name="Sano T."/>
            <person name="Kato M."/>
            <person name="Iwatsuki K."/>
        </authorList>
    </citation>
    <scope>NUCLEOTIDE SEQUENCE [GENOMIC DNA]</scope>
    <source>
        <tissue>Leaf</tissue>
    </source>
</reference>
<dbReference type="EC" id="4.1.1.39"/>
<dbReference type="EMBL" id="U05604">
    <property type="protein sequence ID" value="AAA19888.1"/>
    <property type="molecule type" value="Genomic_DNA"/>
</dbReference>
<dbReference type="SMR" id="P43224"/>
<dbReference type="GO" id="GO:0009507">
    <property type="term" value="C:chloroplast"/>
    <property type="evidence" value="ECO:0007669"/>
    <property type="project" value="UniProtKB-SubCell"/>
</dbReference>
<dbReference type="GO" id="GO:0000287">
    <property type="term" value="F:magnesium ion binding"/>
    <property type="evidence" value="ECO:0007669"/>
    <property type="project" value="InterPro"/>
</dbReference>
<dbReference type="GO" id="GO:0004497">
    <property type="term" value="F:monooxygenase activity"/>
    <property type="evidence" value="ECO:0007669"/>
    <property type="project" value="UniProtKB-KW"/>
</dbReference>
<dbReference type="GO" id="GO:0016984">
    <property type="term" value="F:ribulose-bisphosphate carboxylase activity"/>
    <property type="evidence" value="ECO:0007669"/>
    <property type="project" value="UniProtKB-EC"/>
</dbReference>
<dbReference type="GO" id="GO:0009853">
    <property type="term" value="P:photorespiration"/>
    <property type="evidence" value="ECO:0007669"/>
    <property type="project" value="UniProtKB-KW"/>
</dbReference>
<dbReference type="GO" id="GO:0019253">
    <property type="term" value="P:reductive pentose-phosphate cycle"/>
    <property type="evidence" value="ECO:0007669"/>
    <property type="project" value="UniProtKB-KW"/>
</dbReference>
<dbReference type="Gene3D" id="3.20.20.110">
    <property type="entry name" value="Ribulose bisphosphate carboxylase, large subunit, C-terminal domain"/>
    <property type="match status" value="1"/>
</dbReference>
<dbReference type="Gene3D" id="3.30.70.150">
    <property type="entry name" value="RuBisCO large subunit, N-terminal domain"/>
    <property type="match status" value="1"/>
</dbReference>
<dbReference type="InterPro" id="IPR033966">
    <property type="entry name" value="RuBisCO"/>
</dbReference>
<dbReference type="InterPro" id="IPR020878">
    <property type="entry name" value="RuBisCo_large_chain_AS"/>
</dbReference>
<dbReference type="InterPro" id="IPR000685">
    <property type="entry name" value="RuBisCO_lsu_C"/>
</dbReference>
<dbReference type="InterPro" id="IPR036376">
    <property type="entry name" value="RuBisCO_lsu_C_sf"/>
</dbReference>
<dbReference type="InterPro" id="IPR017443">
    <property type="entry name" value="RuBisCO_lsu_fd_N"/>
</dbReference>
<dbReference type="InterPro" id="IPR036422">
    <property type="entry name" value="RuBisCO_lsu_N_sf"/>
</dbReference>
<dbReference type="NCBIfam" id="NF003252">
    <property type="entry name" value="PRK04208.1"/>
    <property type="match status" value="1"/>
</dbReference>
<dbReference type="PANTHER" id="PTHR42704">
    <property type="entry name" value="RIBULOSE BISPHOSPHATE CARBOXYLASE"/>
    <property type="match status" value="1"/>
</dbReference>
<dbReference type="PANTHER" id="PTHR42704:SF17">
    <property type="entry name" value="RIBULOSE BISPHOSPHATE CARBOXYLASE LARGE CHAIN"/>
    <property type="match status" value="1"/>
</dbReference>
<dbReference type="Pfam" id="PF00016">
    <property type="entry name" value="RuBisCO_large"/>
    <property type="match status" value="1"/>
</dbReference>
<dbReference type="Pfam" id="PF02788">
    <property type="entry name" value="RuBisCO_large_N"/>
    <property type="match status" value="1"/>
</dbReference>
<dbReference type="SFLD" id="SFLDG01052">
    <property type="entry name" value="RuBisCO"/>
    <property type="match status" value="1"/>
</dbReference>
<dbReference type="SFLD" id="SFLDS00014">
    <property type="entry name" value="RuBisCO"/>
    <property type="match status" value="1"/>
</dbReference>
<dbReference type="SFLD" id="SFLDG00301">
    <property type="entry name" value="RuBisCO-like_proteins"/>
    <property type="match status" value="1"/>
</dbReference>
<dbReference type="SUPFAM" id="SSF51649">
    <property type="entry name" value="RuBisCo, C-terminal domain"/>
    <property type="match status" value="1"/>
</dbReference>
<dbReference type="SUPFAM" id="SSF54966">
    <property type="entry name" value="RuBisCO, large subunit, small (N-terminal) domain"/>
    <property type="match status" value="1"/>
</dbReference>
<dbReference type="PROSITE" id="PS00157">
    <property type="entry name" value="RUBISCO_LARGE"/>
    <property type="match status" value="1"/>
</dbReference>
<organism>
    <name type="scientific">Antrophyum reticulatum</name>
    <name type="common">Ox-tongue fern</name>
    <dbReference type="NCBI Taxonomy" id="29628"/>
    <lineage>
        <taxon>Eukaryota</taxon>
        <taxon>Viridiplantae</taxon>
        <taxon>Streptophyta</taxon>
        <taxon>Embryophyta</taxon>
        <taxon>Tracheophyta</taxon>
        <taxon>Polypodiopsida</taxon>
        <taxon>Polypodiidae</taxon>
        <taxon>Polypodiales</taxon>
        <taxon>Pteridineae</taxon>
        <taxon>Pteridaceae</taxon>
        <taxon>Vittarioideae</taxon>
        <taxon>Antrophyum</taxon>
    </lineage>
</organism>
<geneLocation type="chloroplast"/>
<evidence type="ECO:0000250" key="1"/>
<evidence type="ECO:0000255" key="2">
    <source>
        <dbReference type="PROSITE-ProRule" id="PRU10114"/>
    </source>
</evidence>
<evidence type="ECO:0000305" key="3"/>
<gene>
    <name type="primary">rbcL</name>
</gene>
<comment type="function">
    <text evidence="1">RuBisCO catalyzes two reactions: the carboxylation of D-ribulose 1,5-bisphosphate, the primary event in carbon dioxide fixation, as well as the oxidative fragmentation of the pentose substrate in the photorespiration process. Both reactions occur simultaneously and in competition at the same active site (By similarity).</text>
</comment>
<comment type="catalytic activity">
    <reaction>
        <text>2 (2R)-3-phosphoglycerate + 2 H(+) = D-ribulose 1,5-bisphosphate + CO2 + H2O</text>
        <dbReference type="Rhea" id="RHEA:23124"/>
        <dbReference type="ChEBI" id="CHEBI:15377"/>
        <dbReference type="ChEBI" id="CHEBI:15378"/>
        <dbReference type="ChEBI" id="CHEBI:16526"/>
        <dbReference type="ChEBI" id="CHEBI:57870"/>
        <dbReference type="ChEBI" id="CHEBI:58272"/>
        <dbReference type="EC" id="4.1.1.39"/>
    </reaction>
</comment>
<comment type="catalytic activity">
    <reaction>
        <text>D-ribulose 1,5-bisphosphate + O2 = 2-phosphoglycolate + (2R)-3-phosphoglycerate + 2 H(+)</text>
        <dbReference type="Rhea" id="RHEA:36631"/>
        <dbReference type="ChEBI" id="CHEBI:15378"/>
        <dbReference type="ChEBI" id="CHEBI:15379"/>
        <dbReference type="ChEBI" id="CHEBI:57870"/>
        <dbReference type="ChEBI" id="CHEBI:58033"/>
        <dbReference type="ChEBI" id="CHEBI:58272"/>
    </reaction>
</comment>
<comment type="cofactor">
    <cofactor evidence="1">
        <name>Mg(2+)</name>
        <dbReference type="ChEBI" id="CHEBI:18420"/>
    </cofactor>
    <text evidence="1">Binds 1 Mg(2+) ion per subunit.</text>
</comment>
<comment type="subunit">
    <text evidence="1">Heterohexadecamer of 8 large chains and 8 small chains; disulfide-linked. The disulfide link is formed within the large subunit homodimers (By similarity).</text>
</comment>
<comment type="subcellular location">
    <subcellularLocation>
        <location>Plastid</location>
        <location>Chloroplast</location>
    </subcellularLocation>
</comment>
<comment type="PTM">
    <text evidence="1">The disulfide bond which can form in the large chain dimeric partners within the hexadecamer appears to be associated with oxidative stress and protein turnover.</text>
</comment>
<comment type="miscellaneous">
    <text evidence="1">The basic functional RuBisCO is composed of a large chain homodimer in a 'head-to-tail' conformation. In form I RuBisCO this homodimer is arranged in a barrel-like tetramer with the small subunits forming a tetrameric 'cap' on each end of the 'barrel' (By similarity).</text>
</comment>
<comment type="similarity">
    <text evidence="3">Belongs to the RuBisCO large chain family. Type I subfamily.</text>
</comment>
<protein>
    <recommendedName>
        <fullName>Ribulose bisphosphate carboxylase large chain</fullName>
        <shortName>RuBisCO large subunit</shortName>
        <ecNumber>4.1.1.39</ecNumber>
    </recommendedName>
</protein>
<sequence>LTYYTPEYKTKDTDILGAFRMTPQPGVPAEEAGAAVAAESSTGTWTTVWTDGLTSLDRYKGRCYDIEPVAGEENQYIVYVAYPLDLFEEGSVTNMFTSIVGNVFGFKALRALRLEDLRIPPAYSKTFQGPPHGIQVERDKLNKYGRPLLGCTIKPKLGLSAKNYGRAVYECLRGGLDFTKDDENVNSQPFMRWRDRFLFVAEALFKSQAETGEIKGHYLNATAGHCEEMMKRAIFARELGAPIVMHDYLTGGFTANTSLAHYCRDNGLLLHIHRAMHAVISRQKIHGMHFRVLAKGLRMSGGDHIHGGTVVGKLEGEREVTLGFVDLLRDDFIEKDRNRGIYFTQDWVSMPGVIPVASGGIHVWHMPALTEILGDESVPQFGGGTLGHPWGIAPGSVANPVAVETSVQLRNEGR</sequence>
<keyword id="KW-0113">Calvin cycle</keyword>
<keyword id="KW-0120">Carbon dioxide fixation</keyword>
<keyword id="KW-0150">Chloroplast</keyword>
<keyword id="KW-1015">Disulfide bond</keyword>
<keyword id="KW-0456">Lyase</keyword>
<keyword id="KW-0460">Magnesium</keyword>
<keyword id="KW-0479">Metal-binding</keyword>
<keyword id="KW-0503">Monooxygenase</keyword>
<keyword id="KW-0560">Oxidoreductase</keyword>
<keyword id="KW-0601">Photorespiration</keyword>
<keyword id="KW-0602">Photosynthesis</keyword>
<keyword id="KW-0934">Plastid</keyword>
<accession>P43224</accession>
<name>RBL_ANTRE</name>
<feature type="chain" id="PRO_0000062355" description="Ribulose bisphosphate carboxylase large chain">
    <location>
        <begin position="1" status="less than"/>
        <end position="414" status="greater than"/>
    </location>
</feature>
<feature type="active site" description="Proton acceptor" evidence="1">
    <location>
        <position position="154"/>
    </location>
</feature>
<feature type="active site" description="Proton acceptor" evidence="1">
    <location>
        <position position="273"/>
    </location>
</feature>
<feature type="binding site" description="in homodimeric partner" evidence="1">
    <location>
        <position position="102"/>
    </location>
    <ligand>
        <name>substrate</name>
    </ligand>
</feature>
<feature type="binding site" evidence="1">
    <location>
        <position position="152"/>
    </location>
    <ligand>
        <name>substrate</name>
    </ligand>
</feature>
<feature type="binding site" evidence="1">
    <location>
        <position position="156"/>
    </location>
    <ligand>
        <name>substrate</name>
    </ligand>
</feature>
<feature type="binding site" description="via carbamate group" evidence="2">
    <location>
        <position position="180"/>
    </location>
    <ligand>
        <name>Mg(2+)</name>
        <dbReference type="ChEBI" id="CHEBI:18420"/>
    </ligand>
</feature>
<feature type="binding site" evidence="2">
    <location>
        <position position="182"/>
    </location>
    <ligand>
        <name>Mg(2+)</name>
        <dbReference type="ChEBI" id="CHEBI:18420"/>
    </ligand>
</feature>
<feature type="binding site" evidence="2">
    <location>
        <position position="183"/>
    </location>
    <ligand>
        <name>Mg(2+)</name>
        <dbReference type="ChEBI" id="CHEBI:18420"/>
    </ligand>
</feature>
<feature type="binding site" evidence="1">
    <location>
        <position position="274"/>
    </location>
    <ligand>
        <name>substrate</name>
    </ligand>
</feature>
<feature type="binding site" evidence="1">
    <location>
        <position position="306"/>
    </location>
    <ligand>
        <name>substrate</name>
    </ligand>
</feature>
<feature type="binding site" evidence="1">
    <location>
        <position position="358"/>
    </location>
    <ligand>
        <name>substrate</name>
    </ligand>
</feature>
<feature type="site" description="Transition state stabilizer" evidence="1">
    <location>
        <position position="313"/>
    </location>
</feature>
<feature type="modified residue" description="N6-carboxylysine" evidence="2">
    <location>
        <position position="180"/>
    </location>
</feature>
<feature type="disulfide bond" description="Interchain; in linked form" evidence="1">
    <location>
        <position position="226"/>
    </location>
</feature>
<feature type="non-terminal residue">
    <location>
        <position position="1"/>
    </location>
</feature>
<feature type="non-terminal residue">
    <location>
        <position position="414"/>
    </location>
</feature>
<proteinExistence type="inferred from homology"/>